<dbReference type="EMBL" id="DS571329">
    <property type="protein sequence ID" value="EAL47145.1"/>
    <property type="molecule type" value="Genomic_DNA"/>
</dbReference>
<dbReference type="RefSeq" id="XP_652533.1">
    <property type="nucleotide sequence ID" value="XM_647441.1"/>
</dbReference>
<dbReference type="SMR" id="C4M7H7"/>
<dbReference type="FunCoup" id="C4M7H7">
    <property type="interactions" value="588"/>
</dbReference>
<dbReference type="STRING" id="5759.C4M7H7"/>
<dbReference type="GeneID" id="3406838"/>
<dbReference type="KEGG" id="ehi:EHI_112050"/>
<dbReference type="VEuPathDB" id="AmoebaDB:EHI5A_043810"/>
<dbReference type="VEuPathDB" id="AmoebaDB:EHI7A_023660"/>
<dbReference type="VEuPathDB" id="AmoebaDB:EHI8A_114190"/>
<dbReference type="VEuPathDB" id="AmoebaDB:EHI_112050"/>
<dbReference type="VEuPathDB" id="AmoebaDB:KM1_049680"/>
<dbReference type="eggNOG" id="KOG3302">
    <property type="taxonomic scope" value="Eukaryota"/>
</dbReference>
<dbReference type="InParanoid" id="C4M7H7"/>
<dbReference type="OMA" id="NCEYEPE"/>
<dbReference type="OrthoDB" id="2127950at2759"/>
<dbReference type="Proteomes" id="UP000001926">
    <property type="component" value="Partially assembled WGS sequence"/>
</dbReference>
<dbReference type="GO" id="GO:0005634">
    <property type="term" value="C:nucleus"/>
    <property type="evidence" value="ECO:0000250"/>
    <property type="project" value="UniProtKB"/>
</dbReference>
<dbReference type="GO" id="GO:0003677">
    <property type="term" value="F:DNA binding"/>
    <property type="evidence" value="ECO:0000250"/>
    <property type="project" value="UniProtKB"/>
</dbReference>
<dbReference type="GO" id="GO:0016251">
    <property type="term" value="F:RNA polymerase II general transcription initiation factor activity"/>
    <property type="evidence" value="ECO:0000318"/>
    <property type="project" value="GO_Central"/>
</dbReference>
<dbReference type="GO" id="GO:0006352">
    <property type="term" value="P:DNA-templated transcription initiation"/>
    <property type="evidence" value="ECO:0000318"/>
    <property type="project" value="GO_Central"/>
</dbReference>
<dbReference type="GO" id="GO:0060261">
    <property type="term" value="P:positive regulation of transcription initiation by RNA polymerase II"/>
    <property type="evidence" value="ECO:0000250"/>
    <property type="project" value="UniProtKB"/>
</dbReference>
<dbReference type="GO" id="GO:0006366">
    <property type="term" value="P:transcription by RNA polymerase II"/>
    <property type="evidence" value="ECO:0000250"/>
    <property type="project" value="UniProtKB"/>
</dbReference>
<dbReference type="CDD" id="cd04516">
    <property type="entry name" value="TBP_eukaryotes"/>
    <property type="match status" value="1"/>
</dbReference>
<dbReference type="FunFam" id="3.30.310.10:FF:000005">
    <property type="entry name" value="TATA box-binding protein-like 1"/>
    <property type="match status" value="1"/>
</dbReference>
<dbReference type="FunFam" id="3.30.310.10:FF:000002">
    <property type="entry name" value="TATA-box-binding protein 2"/>
    <property type="match status" value="1"/>
</dbReference>
<dbReference type="Gene3D" id="3.30.310.10">
    <property type="entry name" value="TATA-Binding Protein"/>
    <property type="match status" value="2"/>
</dbReference>
<dbReference type="HAMAP" id="MF_00408">
    <property type="entry name" value="TATA_bind_prot_arch"/>
    <property type="match status" value="1"/>
</dbReference>
<dbReference type="InterPro" id="IPR000814">
    <property type="entry name" value="TBP"/>
</dbReference>
<dbReference type="InterPro" id="IPR030491">
    <property type="entry name" value="TBP_CS"/>
</dbReference>
<dbReference type="InterPro" id="IPR012295">
    <property type="entry name" value="TBP_dom_sf"/>
</dbReference>
<dbReference type="InterPro" id="IPR033710">
    <property type="entry name" value="TBP_eukaryotic"/>
</dbReference>
<dbReference type="PANTHER" id="PTHR10126">
    <property type="entry name" value="TATA-BOX BINDING PROTEIN"/>
    <property type="match status" value="1"/>
</dbReference>
<dbReference type="Pfam" id="PF00352">
    <property type="entry name" value="TBP"/>
    <property type="match status" value="2"/>
</dbReference>
<dbReference type="PRINTS" id="PR00686">
    <property type="entry name" value="TIFACTORIID"/>
</dbReference>
<dbReference type="SUPFAM" id="SSF55945">
    <property type="entry name" value="TATA-box binding protein-like"/>
    <property type="match status" value="2"/>
</dbReference>
<dbReference type="PROSITE" id="PS00351">
    <property type="entry name" value="TFIID"/>
    <property type="match status" value="1"/>
</dbReference>
<keyword id="KW-0238">DNA-binding</keyword>
<keyword id="KW-0539">Nucleus</keyword>
<keyword id="KW-1185">Reference proteome</keyword>
<keyword id="KW-0677">Repeat</keyword>
<keyword id="KW-0804">Transcription</keyword>
<keyword id="KW-0805">Transcription regulation</keyword>
<proteinExistence type="inferred from homology"/>
<name>TBP2_ENTH1</name>
<sequence>MSQLGNICHADYMSTSTESQERSLNNPNDTHPEIVNVVSTFQLGVKLELRKIVQKARNAEYNPKRFAGAIMRISSPKSTALIFQTGKIVCTGTRSIEESKIASKKYAKIIKKIGYPIHYSNFNVQNIVGSCDVKFQIALRTLVDSYLAFCQYEPEVFPGLVYRMASPKVTLLVFSTGKVVLTGAKDEESLNLAYKNIYPILLANRKEDISNQ</sequence>
<protein>
    <recommendedName>
        <fullName>TATA-box-binding protein 2</fullName>
        <shortName evidence="2">EhTBP2</shortName>
    </recommendedName>
    <alternativeName>
        <fullName>TATA sequence-binding protein</fullName>
    </alternativeName>
    <alternativeName>
        <fullName>TATA-binding factor</fullName>
    </alternativeName>
    <alternativeName>
        <fullName>TATA-box factor</fullName>
    </alternativeName>
    <alternativeName>
        <fullName>Transcription initiation factor TFIID TBP subunit</fullName>
    </alternativeName>
</protein>
<gene>
    <name type="ORF">EHI_112050</name>
</gene>
<organism>
    <name type="scientific">Entamoeba histolytica (strain ATCC 30459 / HM-1:IMSS / ABRM)</name>
    <dbReference type="NCBI Taxonomy" id="294381"/>
    <lineage>
        <taxon>Eukaryota</taxon>
        <taxon>Amoebozoa</taxon>
        <taxon>Evosea</taxon>
        <taxon>Archamoebae</taxon>
        <taxon>Mastigamoebida</taxon>
        <taxon>Entamoebidae</taxon>
        <taxon>Entamoeba</taxon>
    </lineage>
</organism>
<reference evidence="4" key="1">
    <citation type="journal article" date="2005" name="Nature">
        <title>The genome of the protist parasite Entamoeba histolytica.</title>
        <authorList>
            <person name="Loftus B.J."/>
            <person name="Anderson I."/>
            <person name="Davies R."/>
            <person name="Alsmark U.C."/>
            <person name="Samuelson J."/>
            <person name="Amedeo P."/>
            <person name="Roncaglia P."/>
            <person name="Berriman M."/>
            <person name="Hirt R.P."/>
            <person name="Mann B.J."/>
            <person name="Nozaki T."/>
            <person name="Suh B."/>
            <person name="Pop M."/>
            <person name="Duchene M."/>
            <person name="Ackers J."/>
            <person name="Tannich E."/>
            <person name="Leippe M."/>
            <person name="Hofer M."/>
            <person name="Bruchhaus I."/>
            <person name="Willhoeft U."/>
            <person name="Bhattacharya A."/>
            <person name="Chillingworth T."/>
            <person name="Churcher C.M."/>
            <person name="Hance Z."/>
            <person name="Harris B."/>
            <person name="Harris D."/>
            <person name="Jagels K."/>
            <person name="Moule S."/>
            <person name="Mungall K.L."/>
            <person name="Ormond D."/>
            <person name="Squares R."/>
            <person name="Whitehead S."/>
            <person name="Quail M.A."/>
            <person name="Rabbinowitsch E."/>
            <person name="Norbertczak H."/>
            <person name="Price C."/>
            <person name="Wang Z."/>
            <person name="Guillen N."/>
            <person name="Gilchrist C."/>
            <person name="Stroup S.E."/>
            <person name="Bhattacharya S."/>
            <person name="Lohia A."/>
            <person name="Foster P.G."/>
            <person name="Sicheritz-Ponten T."/>
            <person name="Weber C."/>
            <person name="Singh U."/>
            <person name="Mukherjee C."/>
            <person name="El-Sayed N.M.A."/>
            <person name="Petri W.A."/>
            <person name="Clark C.G."/>
            <person name="Embley T.M."/>
            <person name="Barrell B.G."/>
            <person name="Fraser C.M."/>
            <person name="Hall N."/>
        </authorList>
    </citation>
    <scope>NUCLEOTIDE SEQUENCE [LARGE SCALE GENOMIC DNA]</scope>
    <source>
        <strain>ATCC 30459 / HM-1:IMSS / ABRM</strain>
    </source>
</reference>
<reference evidence="3 4" key="2">
    <citation type="journal article" date="2010" name="PLoS Negl. Trop. Dis.">
        <title>New assembly, reannotation and analysis of the Entamoeba histolytica genome reveal new genomic features and protein content information.</title>
        <authorList>
            <person name="Lorenzi H.A."/>
            <person name="Puiu D."/>
            <person name="Miller J.R."/>
            <person name="Brinkac L.M."/>
            <person name="Amedeo P."/>
            <person name="Hall N."/>
            <person name="Caler E.V."/>
        </authorList>
    </citation>
    <scope>GENOME REANNOTATION</scope>
    <source>
        <strain>ATCC 30459 / HM-1:IMSS / ABRM</strain>
    </source>
</reference>
<reference evidence="3" key="3">
    <citation type="journal article" date="2010" name="Protein Expr. Purif.">
        <title>Entamoeba histolytica: a unicellular organism containing two active genes encoding for members of the TBP family.</title>
        <authorList>
            <person name="Castanon-Sanchez C.A."/>
            <person name="Luna-Arias J.P."/>
            <person name="de Dios-Bravo M.G."/>
            <person name="Herrera-Aguirre M.E."/>
            <person name="Olivares-Trejo J.J."/>
            <person name="Orozco E."/>
            <person name="Hernandez J.M."/>
        </authorList>
    </citation>
    <scope>IDENTIFICATION</scope>
</reference>
<feature type="chain" id="PRO_0000394122" description="TATA-box-binding protein 2">
    <location>
        <begin position="1"/>
        <end position="212"/>
    </location>
</feature>
<feature type="repeat" description="1" evidence="1">
    <location>
        <begin position="30"/>
        <end position="114"/>
    </location>
</feature>
<feature type="repeat" description="2" evidence="1">
    <location>
        <begin position="120"/>
        <end position="201"/>
    </location>
</feature>
<accession>C4M7H7</accession>
<evidence type="ECO:0000255" key="1"/>
<evidence type="ECO:0000303" key="2">
    <source>
    </source>
</evidence>
<evidence type="ECO:0000305" key="3"/>
<evidence type="ECO:0000312" key="4">
    <source>
        <dbReference type="EMBL" id="EAL47145.1"/>
    </source>
</evidence>
<comment type="function">
    <text evidence="3">General transcription factor that functions at the core of the DNA-binding multiprotein factor TFIID. Binding of TFIID to the TATA box is the initial transcriptional step of the pre-initiation complex (PIC), playing a role in the activation of eukaryotic genes transcribed by RNA polymerase II.</text>
</comment>
<comment type="subunit">
    <text evidence="3">Belongs to the TFIID complex together with the TBP-associated factors (TAFs). Binds DNA as monomer.</text>
</comment>
<comment type="subcellular location">
    <subcellularLocation>
        <location evidence="3">Nucleus</location>
    </subcellularLocation>
</comment>
<comment type="similarity">
    <text evidence="1">Belongs to the TBP family.</text>
</comment>